<evidence type="ECO:0000255" key="1">
    <source>
        <dbReference type="HAMAP-Rule" id="MF_01106"/>
    </source>
</evidence>
<name>ARGJ_RHIME</name>
<reference key="1">
    <citation type="journal article" date="2001" name="Proc. Natl. Acad. Sci. U.S.A.">
        <title>Analysis of the chromosome sequence of the legume symbiont Sinorhizobium meliloti strain 1021.</title>
        <authorList>
            <person name="Capela D."/>
            <person name="Barloy-Hubler F."/>
            <person name="Gouzy J."/>
            <person name="Bothe G."/>
            <person name="Ampe F."/>
            <person name="Batut J."/>
            <person name="Boistard P."/>
            <person name="Becker A."/>
            <person name="Boutry M."/>
            <person name="Cadieu E."/>
            <person name="Dreano S."/>
            <person name="Gloux S."/>
            <person name="Godrie T."/>
            <person name="Goffeau A."/>
            <person name="Kahn D."/>
            <person name="Kiss E."/>
            <person name="Lelaure V."/>
            <person name="Masuy D."/>
            <person name="Pohl T."/>
            <person name="Portetelle D."/>
            <person name="Puehler A."/>
            <person name="Purnelle B."/>
            <person name="Ramsperger U."/>
            <person name="Renard C."/>
            <person name="Thebault P."/>
            <person name="Vandenbol M."/>
            <person name="Weidner S."/>
            <person name="Galibert F."/>
        </authorList>
    </citation>
    <scope>NUCLEOTIDE SEQUENCE [LARGE SCALE GENOMIC DNA]</scope>
    <source>
        <strain>1021</strain>
    </source>
</reference>
<reference key="2">
    <citation type="journal article" date="2001" name="Science">
        <title>The composite genome of the legume symbiont Sinorhizobium meliloti.</title>
        <authorList>
            <person name="Galibert F."/>
            <person name="Finan T.M."/>
            <person name="Long S.R."/>
            <person name="Puehler A."/>
            <person name="Abola P."/>
            <person name="Ampe F."/>
            <person name="Barloy-Hubler F."/>
            <person name="Barnett M.J."/>
            <person name="Becker A."/>
            <person name="Boistard P."/>
            <person name="Bothe G."/>
            <person name="Boutry M."/>
            <person name="Bowser L."/>
            <person name="Buhrmester J."/>
            <person name="Cadieu E."/>
            <person name="Capela D."/>
            <person name="Chain P."/>
            <person name="Cowie A."/>
            <person name="Davis R.W."/>
            <person name="Dreano S."/>
            <person name="Federspiel N.A."/>
            <person name="Fisher R.F."/>
            <person name="Gloux S."/>
            <person name="Godrie T."/>
            <person name="Goffeau A."/>
            <person name="Golding B."/>
            <person name="Gouzy J."/>
            <person name="Gurjal M."/>
            <person name="Hernandez-Lucas I."/>
            <person name="Hong A."/>
            <person name="Huizar L."/>
            <person name="Hyman R.W."/>
            <person name="Jones T."/>
            <person name="Kahn D."/>
            <person name="Kahn M.L."/>
            <person name="Kalman S."/>
            <person name="Keating D.H."/>
            <person name="Kiss E."/>
            <person name="Komp C."/>
            <person name="Lelaure V."/>
            <person name="Masuy D."/>
            <person name="Palm C."/>
            <person name="Peck M.C."/>
            <person name="Pohl T.M."/>
            <person name="Portetelle D."/>
            <person name="Purnelle B."/>
            <person name="Ramsperger U."/>
            <person name="Surzycki R."/>
            <person name="Thebault P."/>
            <person name="Vandenbol M."/>
            <person name="Vorhoelter F.J."/>
            <person name="Weidner S."/>
            <person name="Wells D.H."/>
            <person name="Wong K."/>
            <person name="Yeh K.-C."/>
            <person name="Batut J."/>
        </authorList>
    </citation>
    <scope>NUCLEOTIDE SEQUENCE [LARGE SCALE GENOMIC DNA]</scope>
    <source>
        <strain>1021</strain>
    </source>
</reference>
<sequence length="413" mass="42946">MSGSVSPLAPKTFAEMPALRGVRMATAAAGIKYKNRTDVLMMLFDRPASVAGVFTRSKCPSAPVDHCRQNLPGGIARAVVVNSGNANAFTGKKGREATRLTAEAAAKAVGCSEAEVFLASTGVIGEPLDATKFAGVLDKLAASATQDFWFEAAKAIMTTDTYPKVATRSAEIGGVKVAINGIAKGAGMIAPDMATMLSFVVTDADIAPAALQALLQAGVEPTFNSVTVDSDTSTSDTLMLFATGAAAGDGQAKVEDAADPRLDGFRAALDDLLRDLALQVVRDGEGARKMVEVTVEGAENDAAAKRIALSIANSPLVKTAVAGEDANWGRVVMAVGKSGEMAERDRLAIWFGDIRVAVEGERDPAYSEAAATAVMQGETIPIRVDIGLGSGRATVYTCDLTKEYVEINGDYRS</sequence>
<protein>
    <recommendedName>
        <fullName evidence="1">Arginine biosynthesis bifunctional protein ArgJ</fullName>
    </recommendedName>
    <domain>
        <recommendedName>
            <fullName evidence="1">Glutamate N-acetyltransferase</fullName>
            <ecNumber evidence="1">2.3.1.35</ecNumber>
        </recommendedName>
        <alternativeName>
            <fullName evidence="1">Ornithine acetyltransferase</fullName>
            <shortName evidence="1">OATase</shortName>
        </alternativeName>
        <alternativeName>
            <fullName evidence="1">Ornithine transacetylase</fullName>
        </alternativeName>
    </domain>
    <domain>
        <recommendedName>
            <fullName evidence="1">Amino-acid acetyltransferase</fullName>
            <ecNumber evidence="1">2.3.1.1</ecNumber>
        </recommendedName>
        <alternativeName>
            <fullName evidence="1">N-acetylglutamate synthase</fullName>
            <shortName evidence="1">AGSase</shortName>
        </alternativeName>
    </domain>
    <component>
        <recommendedName>
            <fullName evidence="1">Arginine biosynthesis bifunctional protein ArgJ alpha chain</fullName>
        </recommendedName>
    </component>
    <component>
        <recommendedName>
            <fullName evidence="1">Arginine biosynthesis bifunctional protein ArgJ beta chain</fullName>
        </recommendedName>
    </component>
</protein>
<dbReference type="EC" id="2.3.1.35" evidence="1"/>
<dbReference type="EC" id="2.3.1.1" evidence="1"/>
<dbReference type="EMBL" id="AL591688">
    <property type="protein sequence ID" value="CAC47204.1"/>
    <property type="molecule type" value="Genomic_DNA"/>
</dbReference>
<dbReference type="RefSeq" id="NP_386731.2">
    <property type="nucleotide sequence ID" value="NC_003047.1"/>
</dbReference>
<dbReference type="RefSeq" id="WP_010970084.1">
    <property type="nucleotide sequence ID" value="NC_003047.1"/>
</dbReference>
<dbReference type="SMR" id="Q92MJ1"/>
<dbReference type="MEROPS" id="T05.001"/>
<dbReference type="EnsemblBacteria" id="CAC47204">
    <property type="protein sequence ID" value="CAC47204"/>
    <property type="gene ID" value="SMc02450"/>
</dbReference>
<dbReference type="KEGG" id="sme:SMc02450"/>
<dbReference type="PATRIC" id="fig|266834.11.peg.4123"/>
<dbReference type="eggNOG" id="COG1364">
    <property type="taxonomic scope" value="Bacteria"/>
</dbReference>
<dbReference type="OrthoDB" id="9804242at2"/>
<dbReference type="BRENDA" id="2.3.1.35">
    <property type="organism ID" value="5347"/>
</dbReference>
<dbReference type="UniPathway" id="UPA00068">
    <property type="reaction ID" value="UER00106"/>
</dbReference>
<dbReference type="UniPathway" id="UPA00068">
    <property type="reaction ID" value="UER00111"/>
</dbReference>
<dbReference type="Proteomes" id="UP000001976">
    <property type="component" value="Chromosome"/>
</dbReference>
<dbReference type="GO" id="GO:0005737">
    <property type="term" value="C:cytoplasm"/>
    <property type="evidence" value="ECO:0007669"/>
    <property type="project" value="UniProtKB-SubCell"/>
</dbReference>
<dbReference type="GO" id="GO:0004358">
    <property type="term" value="F:glutamate N-acetyltransferase activity"/>
    <property type="evidence" value="ECO:0007669"/>
    <property type="project" value="UniProtKB-UniRule"/>
</dbReference>
<dbReference type="GO" id="GO:0004042">
    <property type="term" value="F:L-glutamate N-acetyltransferase activity"/>
    <property type="evidence" value="ECO:0007669"/>
    <property type="project" value="UniProtKB-UniRule"/>
</dbReference>
<dbReference type="GO" id="GO:0006526">
    <property type="term" value="P:L-arginine biosynthetic process"/>
    <property type="evidence" value="ECO:0007669"/>
    <property type="project" value="UniProtKB-UniRule"/>
</dbReference>
<dbReference type="GO" id="GO:0006592">
    <property type="term" value="P:ornithine biosynthetic process"/>
    <property type="evidence" value="ECO:0007669"/>
    <property type="project" value="TreeGrafter"/>
</dbReference>
<dbReference type="CDD" id="cd02152">
    <property type="entry name" value="OAT"/>
    <property type="match status" value="1"/>
</dbReference>
<dbReference type="FunFam" id="3.10.20.340:FF:000003">
    <property type="entry name" value="Arginine biosynthesis bifunctional protein ArgJ"/>
    <property type="match status" value="1"/>
</dbReference>
<dbReference type="FunFam" id="3.60.70.12:FF:000001">
    <property type="entry name" value="Arginine biosynthesis bifunctional protein ArgJ, chloroplastic"/>
    <property type="match status" value="1"/>
</dbReference>
<dbReference type="Gene3D" id="3.10.20.340">
    <property type="entry name" value="ArgJ beta chain, C-terminal domain"/>
    <property type="match status" value="1"/>
</dbReference>
<dbReference type="Gene3D" id="3.60.70.12">
    <property type="entry name" value="L-amino peptidase D-ALA esterase/amidase"/>
    <property type="match status" value="1"/>
</dbReference>
<dbReference type="HAMAP" id="MF_01106">
    <property type="entry name" value="ArgJ"/>
    <property type="match status" value="1"/>
</dbReference>
<dbReference type="InterPro" id="IPR002813">
    <property type="entry name" value="Arg_biosynth_ArgJ"/>
</dbReference>
<dbReference type="InterPro" id="IPR016117">
    <property type="entry name" value="ArgJ-like_dom_sf"/>
</dbReference>
<dbReference type="InterPro" id="IPR042195">
    <property type="entry name" value="ArgJ_beta_C"/>
</dbReference>
<dbReference type="NCBIfam" id="TIGR00120">
    <property type="entry name" value="ArgJ"/>
    <property type="match status" value="1"/>
</dbReference>
<dbReference type="NCBIfam" id="NF003802">
    <property type="entry name" value="PRK05388.1"/>
    <property type="match status" value="1"/>
</dbReference>
<dbReference type="PANTHER" id="PTHR23100">
    <property type="entry name" value="ARGININE BIOSYNTHESIS BIFUNCTIONAL PROTEIN ARGJ"/>
    <property type="match status" value="1"/>
</dbReference>
<dbReference type="PANTHER" id="PTHR23100:SF0">
    <property type="entry name" value="ARGININE BIOSYNTHESIS BIFUNCTIONAL PROTEIN ARGJ, MITOCHONDRIAL"/>
    <property type="match status" value="1"/>
</dbReference>
<dbReference type="Pfam" id="PF01960">
    <property type="entry name" value="ArgJ"/>
    <property type="match status" value="1"/>
</dbReference>
<dbReference type="SUPFAM" id="SSF56266">
    <property type="entry name" value="DmpA/ArgJ-like"/>
    <property type="match status" value="1"/>
</dbReference>
<gene>
    <name evidence="1" type="primary">argJ</name>
    <name type="ordered locus">R02625</name>
    <name type="ORF">SMc02450</name>
</gene>
<organism>
    <name type="scientific">Rhizobium meliloti (strain 1021)</name>
    <name type="common">Ensifer meliloti</name>
    <name type="synonym">Sinorhizobium meliloti</name>
    <dbReference type="NCBI Taxonomy" id="266834"/>
    <lineage>
        <taxon>Bacteria</taxon>
        <taxon>Pseudomonadati</taxon>
        <taxon>Pseudomonadota</taxon>
        <taxon>Alphaproteobacteria</taxon>
        <taxon>Hyphomicrobiales</taxon>
        <taxon>Rhizobiaceae</taxon>
        <taxon>Sinorhizobium/Ensifer group</taxon>
        <taxon>Sinorhizobium</taxon>
    </lineage>
</organism>
<proteinExistence type="inferred from homology"/>
<accession>Q92MJ1</accession>
<comment type="function">
    <text evidence="1">Catalyzes two activities which are involved in the cyclic version of arginine biosynthesis: the synthesis of N-acetylglutamate from glutamate and acetyl-CoA as the acetyl donor, and of ornithine by transacetylation between N(2)-acetylornithine and glutamate.</text>
</comment>
<comment type="catalytic activity">
    <reaction evidence="1">
        <text>N(2)-acetyl-L-ornithine + L-glutamate = N-acetyl-L-glutamate + L-ornithine</text>
        <dbReference type="Rhea" id="RHEA:15349"/>
        <dbReference type="ChEBI" id="CHEBI:29985"/>
        <dbReference type="ChEBI" id="CHEBI:44337"/>
        <dbReference type="ChEBI" id="CHEBI:46911"/>
        <dbReference type="ChEBI" id="CHEBI:57805"/>
        <dbReference type="EC" id="2.3.1.35"/>
    </reaction>
</comment>
<comment type="catalytic activity">
    <reaction evidence="1">
        <text>L-glutamate + acetyl-CoA = N-acetyl-L-glutamate + CoA + H(+)</text>
        <dbReference type="Rhea" id="RHEA:24292"/>
        <dbReference type="ChEBI" id="CHEBI:15378"/>
        <dbReference type="ChEBI" id="CHEBI:29985"/>
        <dbReference type="ChEBI" id="CHEBI:44337"/>
        <dbReference type="ChEBI" id="CHEBI:57287"/>
        <dbReference type="ChEBI" id="CHEBI:57288"/>
        <dbReference type="EC" id="2.3.1.1"/>
    </reaction>
</comment>
<comment type="pathway">
    <text evidence="1">Amino-acid biosynthesis; L-arginine biosynthesis; L-ornithine and N-acetyl-L-glutamate from L-glutamate and N(2)-acetyl-L-ornithine (cyclic): step 1/1.</text>
</comment>
<comment type="pathway">
    <text evidence="1">Amino-acid biosynthesis; L-arginine biosynthesis; N(2)-acetyl-L-ornithine from L-glutamate: step 1/4.</text>
</comment>
<comment type="subunit">
    <text evidence="1">Heterotetramer of two alpha and two beta chains.</text>
</comment>
<comment type="subcellular location">
    <subcellularLocation>
        <location evidence="1">Cytoplasm</location>
    </subcellularLocation>
</comment>
<comment type="similarity">
    <text evidence="1">Belongs to the ArgJ family.</text>
</comment>
<feature type="chain" id="PRO_0000002223" description="Arginine biosynthesis bifunctional protein ArgJ alpha chain" evidence="1">
    <location>
        <begin position="1"/>
        <end position="194"/>
    </location>
</feature>
<feature type="chain" id="PRO_0000002224" description="Arginine biosynthesis bifunctional protein ArgJ beta chain" evidence="1">
    <location>
        <begin position="195"/>
        <end position="413"/>
    </location>
</feature>
<feature type="active site" description="Nucleophile" evidence="1">
    <location>
        <position position="195"/>
    </location>
</feature>
<feature type="binding site" evidence="1">
    <location>
        <position position="158"/>
    </location>
    <ligand>
        <name>substrate</name>
    </ligand>
</feature>
<feature type="binding site" evidence="1">
    <location>
        <position position="184"/>
    </location>
    <ligand>
        <name>substrate</name>
    </ligand>
</feature>
<feature type="binding site" evidence="1">
    <location>
        <position position="195"/>
    </location>
    <ligand>
        <name>substrate</name>
    </ligand>
</feature>
<feature type="binding site" evidence="1">
    <location>
        <position position="285"/>
    </location>
    <ligand>
        <name>substrate</name>
    </ligand>
</feature>
<feature type="binding site" evidence="1">
    <location>
        <position position="408"/>
    </location>
    <ligand>
        <name>substrate</name>
    </ligand>
</feature>
<feature type="binding site" evidence="1">
    <location>
        <position position="413"/>
    </location>
    <ligand>
        <name>substrate</name>
    </ligand>
</feature>
<feature type="site" description="Involved in the stabilization of negative charge on the oxyanion by the formation of the oxyanion hole" evidence="1">
    <location>
        <position position="121"/>
    </location>
</feature>
<feature type="site" description="Involved in the stabilization of negative charge on the oxyanion by the formation of the oxyanion hole" evidence="1">
    <location>
        <position position="122"/>
    </location>
</feature>
<feature type="site" description="Cleavage; by autolysis" evidence="1">
    <location>
        <begin position="194"/>
        <end position="195"/>
    </location>
</feature>
<keyword id="KW-0012">Acyltransferase</keyword>
<keyword id="KW-0028">Amino-acid biosynthesis</keyword>
<keyword id="KW-0055">Arginine biosynthesis</keyword>
<keyword id="KW-0068">Autocatalytic cleavage</keyword>
<keyword id="KW-0963">Cytoplasm</keyword>
<keyword id="KW-0511">Multifunctional enzyme</keyword>
<keyword id="KW-1185">Reference proteome</keyword>
<keyword id="KW-0808">Transferase</keyword>